<dbReference type="EMBL" id="CU329671">
    <property type="protein sequence ID" value="CAA17782.1"/>
    <property type="molecule type" value="Genomic_DNA"/>
</dbReference>
<dbReference type="EMBL" id="AB027944">
    <property type="protein sequence ID" value="BAA87248.1"/>
    <property type="molecule type" value="Genomic_DNA"/>
</dbReference>
<dbReference type="PIR" id="T40341">
    <property type="entry name" value="T40341"/>
</dbReference>
<dbReference type="RefSeq" id="NP_596659.1">
    <property type="nucleotide sequence ID" value="NM_001022581.2"/>
</dbReference>
<dbReference type="BioGRID" id="276832">
    <property type="interactions" value="89"/>
</dbReference>
<dbReference type="FunCoup" id="O43031">
    <property type="interactions" value="62"/>
</dbReference>
<dbReference type="IntAct" id="O43031">
    <property type="interactions" value="1"/>
</dbReference>
<dbReference type="STRING" id="284812.O43031"/>
<dbReference type="iPTMnet" id="O43031"/>
<dbReference type="PaxDb" id="4896-SPBC3B9.02c.1"/>
<dbReference type="EnsemblFungi" id="SPBC3B9.02c.1">
    <property type="protein sequence ID" value="SPBC3B9.02c.1:pep"/>
    <property type="gene ID" value="SPBC3B9.02c"/>
</dbReference>
<dbReference type="GeneID" id="2540302"/>
<dbReference type="KEGG" id="spo:2540302"/>
<dbReference type="PomBase" id="SPBC3B9.02c">
    <property type="gene designation" value="cwf28"/>
</dbReference>
<dbReference type="VEuPathDB" id="FungiDB:SPBC3B9.02c"/>
<dbReference type="eggNOG" id="ENOG502RZY8">
    <property type="taxonomic scope" value="Eukaryota"/>
</dbReference>
<dbReference type="HOGENOM" id="CLU_756852_0_0_1"/>
<dbReference type="InParanoid" id="O43031"/>
<dbReference type="OMA" id="AWGKSAM"/>
<dbReference type="PhylomeDB" id="O43031"/>
<dbReference type="PRO" id="PR:O43031"/>
<dbReference type="Proteomes" id="UP000002485">
    <property type="component" value="Chromosome II"/>
</dbReference>
<dbReference type="GO" id="GO:0072686">
    <property type="term" value="C:mitotic spindle"/>
    <property type="evidence" value="ECO:0007005"/>
    <property type="project" value="PomBase"/>
</dbReference>
<dbReference type="GO" id="GO:0005634">
    <property type="term" value="C:nucleus"/>
    <property type="evidence" value="ECO:0007005"/>
    <property type="project" value="PomBase"/>
</dbReference>
<dbReference type="GO" id="GO:0005681">
    <property type="term" value="C:spliceosomal complex"/>
    <property type="evidence" value="ECO:0000318"/>
    <property type="project" value="GO_Central"/>
</dbReference>
<dbReference type="GO" id="GO:0000398">
    <property type="term" value="P:mRNA splicing, via spliceosome"/>
    <property type="evidence" value="ECO:0000318"/>
    <property type="project" value="GO_Central"/>
</dbReference>
<dbReference type="InterPro" id="IPR045166">
    <property type="entry name" value="Spp2-like"/>
</dbReference>
<dbReference type="InterPro" id="IPR026822">
    <property type="entry name" value="Spp2/MOS2_G-patch"/>
</dbReference>
<dbReference type="PANTHER" id="PTHR15818">
    <property type="entry name" value="G PATCH AND KOW-CONTAINING"/>
    <property type="match status" value="1"/>
</dbReference>
<dbReference type="PANTHER" id="PTHR15818:SF2">
    <property type="entry name" value="G-PATCH DOMAIN AND KOW MOTIFS-CONTAINING PROTEIN"/>
    <property type="match status" value="1"/>
</dbReference>
<dbReference type="Pfam" id="PF12656">
    <property type="entry name" value="G-patch_2"/>
    <property type="match status" value="1"/>
</dbReference>
<evidence type="ECO:0000250" key="1"/>
<evidence type="ECO:0000255" key="2"/>
<evidence type="ECO:0000256" key="3">
    <source>
        <dbReference type="SAM" id="MobiDB-lite"/>
    </source>
</evidence>
<evidence type="ECO:0000269" key="4">
    <source>
    </source>
</evidence>
<evidence type="ECO:0000269" key="5">
    <source>
    </source>
</evidence>
<evidence type="ECO:0000269" key="6">
    <source>
    </source>
</evidence>
<evidence type="ECO:0000269" key="7">
    <source>
    </source>
</evidence>
<evidence type="ECO:0000305" key="8"/>
<feature type="chain" id="PRO_0000218527" description="Pre-mRNA-splicing factor cwf28">
    <location>
        <begin position="1"/>
        <end position="381"/>
    </location>
</feature>
<feature type="region of interest" description="Disordered" evidence="3">
    <location>
        <begin position="1"/>
        <end position="21"/>
    </location>
</feature>
<feature type="region of interest" description="Disordered" evidence="3">
    <location>
        <begin position="262"/>
        <end position="381"/>
    </location>
</feature>
<feature type="coiled-coil region" evidence="2">
    <location>
        <begin position="104"/>
        <end position="157"/>
    </location>
</feature>
<feature type="compositionally biased region" description="Polar residues" evidence="3">
    <location>
        <begin position="274"/>
        <end position="285"/>
    </location>
</feature>
<feature type="compositionally biased region" description="Basic and acidic residues" evidence="3">
    <location>
        <begin position="287"/>
        <end position="297"/>
    </location>
</feature>
<feature type="compositionally biased region" description="Basic and acidic residues" evidence="3">
    <location>
        <begin position="306"/>
        <end position="332"/>
    </location>
</feature>
<feature type="compositionally biased region" description="Basic and acidic residues" evidence="3">
    <location>
        <begin position="362"/>
        <end position="375"/>
    </location>
</feature>
<feature type="modified residue" description="Phosphoserine" evidence="7">
    <location>
        <position position="11"/>
    </location>
</feature>
<feature type="modified residue" description="Phosphoserine" evidence="7">
    <location>
        <position position="13"/>
    </location>
</feature>
<feature type="modified residue" description="Phosphoserine" evidence="7">
    <location>
        <position position="275"/>
    </location>
</feature>
<feature type="modified residue" description="Phosphoserine" evidence="7">
    <location>
        <position position="277"/>
    </location>
</feature>
<comment type="function">
    <text evidence="1">Involved in spliceosome maturation and the first step of pre-mRNA splicing.</text>
</comment>
<comment type="subunit">
    <text evidence="5">Belongs to the 40S cdc5-associated complex (or cwf complex), a spliceosome sub-complex reminiscent of a late-stage spliceosome composed of the U2, U5 and U6 snRNAs and at least brr2, cdc5, cwf2/prp3, cwf3/syf1, cwf4/syf3, cwf5/ecm2, spp42/cwf6, cwf7/spf27, cwf8, cwf9, cwf10, cwf11, cwf12, prp45/cwf13, cwf14, cwf15, cwf16, cwf17, cwf18, cwf19, cwf20, cwf21, cwf22, cwf23, cwf24, cwf25, cwf26, cyp7/cwf27, cwf28, cwf29/ist3, lea1, msl1, prp5/cwf1, prp10, prp12/sap130, prp17, prp22, sap61, sap62, sap114, sap145, slu7, smb1, smd1, smd3, smf1, smg1 and syf2.</text>
</comment>
<comment type="subcellular location">
    <subcellularLocation>
        <location evidence="4 6">Nucleus</location>
    </subcellularLocation>
</comment>
<comment type="similarity">
    <text evidence="8">Belongs to the SPP2 family.</text>
</comment>
<gene>
    <name type="primary">cwf28</name>
    <name type="ORF">SPBC3B9.02c</name>
</gene>
<reference key="1">
    <citation type="journal article" date="2002" name="Nature">
        <title>The genome sequence of Schizosaccharomyces pombe.</title>
        <authorList>
            <person name="Wood V."/>
            <person name="Gwilliam R."/>
            <person name="Rajandream M.A."/>
            <person name="Lyne M.H."/>
            <person name="Lyne R."/>
            <person name="Stewart A."/>
            <person name="Sgouros J.G."/>
            <person name="Peat N."/>
            <person name="Hayles J."/>
            <person name="Baker S.G."/>
            <person name="Basham D."/>
            <person name="Bowman S."/>
            <person name="Brooks K."/>
            <person name="Brown D."/>
            <person name="Brown S."/>
            <person name="Chillingworth T."/>
            <person name="Churcher C.M."/>
            <person name="Collins M."/>
            <person name="Connor R."/>
            <person name="Cronin A."/>
            <person name="Davis P."/>
            <person name="Feltwell T."/>
            <person name="Fraser A."/>
            <person name="Gentles S."/>
            <person name="Goble A."/>
            <person name="Hamlin N."/>
            <person name="Harris D.E."/>
            <person name="Hidalgo J."/>
            <person name="Hodgson G."/>
            <person name="Holroyd S."/>
            <person name="Hornsby T."/>
            <person name="Howarth S."/>
            <person name="Huckle E.J."/>
            <person name="Hunt S."/>
            <person name="Jagels K."/>
            <person name="James K.D."/>
            <person name="Jones L."/>
            <person name="Jones M."/>
            <person name="Leather S."/>
            <person name="McDonald S."/>
            <person name="McLean J."/>
            <person name="Mooney P."/>
            <person name="Moule S."/>
            <person name="Mungall K.L."/>
            <person name="Murphy L.D."/>
            <person name="Niblett D."/>
            <person name="Odell C."/>
            <person name="Oliver K."/>
            <person name="O'Neil S."/>
            <person name="Pearson D."/>
            <person name="Quail M.A."/>
            <person name="Rabbinowitsch E."/>
            <person name="Rutherford K.M."/>
            <person name="Rutter S."/>
            <person name="Saunders D."/>
            <person name="Seeger K."/>
            <person name="Sharp S."/>
            <person name="Skelton J."/>
            <person name="Simmonds M.N."/>
            <person name="Squares R."/>
            <person name="Squares S."/>
            <person name="Stevens K."/>
            <person name="Taylor K."/>
            <person name="Taylor R.G."/>
            <person name="Tivey A."/>
            <person name="Walsh S.V."/>
            <person name="Warren T."/>
            <person name="Whitehead S."/>
            <person name="Woodward J.R."/>
            <person name="Volckaert G."/>
            <person name="Aert R."/>
            <person name="Robben J."/>
            <person name="Grymonprez B."/>
            <person name="Weltjens I."/>
            <person name="Vanstreels E."/>
            <person name="Rieger M."/>
            <person name="Schaefer M."/>
            <person name="Mueller-Auer S."/>
            <person name="Gabel C."/>
            <person name="Fuchs M."/>
            <person name="Duesterhoeft A."/>
            <person name="Fritzc C."/>
            <person name="Holzer E."/>
            <person name="Moestl D."/>
            <person name="Hilbert H."/>
            <person name="Borzym K."/>
            <person name="Langer I."/>
            <person name="Beck A."/>
            <person name="Lehrach H."/>
            <person name="Reinhardt R."/>
            <person name="Pohl T.M."/>
            <person name="Eger P."/>
            <person name="Zimmermann W."/>
            <person name="Wedler H."/>
            <person name="Wambutt R."/>
            <person name="Purnelle B."/>
            <person name="Goffeau A."/>
            <person name="Cadieu E."/>
            <person name="Dreano S."/>
            <person name="Gloux S."/>
            <person name="Lelaure V."/>
            <person name="Mottier S."/>
            <person name="Galibert F."/>
            <person name="Aves S.J."/>
            <person name="Xiang Z."/>
            <person name="Hunt C."/>
            <person name="Moore K."/>
            <person name="Hurst S.M."/>
            <person name="Lucas M."/>
            <person name="Rochet M."/>
            <person name="Gaillardin C."/>
            <person name="Tallada V.A."/>
            <person name="Garzon A."/>
            <person name="Thode G."/>
            <person name="Daga R.R."/>
            <person name="Cruzado L."/>
            <person name="Jimenez J."/>
            <person name="Sanchez M."/>
            <person name="del Rey F."/>
            <person name="Benito J."/>
            <person name="Dominguez A."/>
            <person name="Revuelta J.L."/>
            <person name="Moreno S."/>
            <person name="Armstrong J."/>
            <person name="Forsburg S.L."/>
            <person name="Cerutti L."/>
            <person name="Lowe T."/>
            <person name="McCombie W.R."/>
            <person name="Paulsen I."/>
            <person name="Potashkin J."/>
            <person name="Shpakovski G.V."/>
            <person name="Ussery D."/>
            <person name="Barrell B.G."/>
            <person name="Nurse P."/>
        </authorList>
    </citation>
    <scope>NUCLEOTIDE SEQUENCE [LARGE SCALE GENOMIC DNA]</scope>
    <source>
        <strain>972 / ATCC 24843</strain>
    </source>
</reference>
<reference key="2">
    <citation type="journal article" date="2000" name="Genes Cells">
        <title>Large-scale screening of intracellular protein localization in living fission yeast cells by the use of a GFP-fusion genomic DNA library.</title>
        <authorList>
            <person name="Ding D.-Q."/>
            <person name="Tomita Y."/>
            <person name="Yamamoto A."/>
            <person name="Chikashige Y."/>
            <person name="Haraguchi T."/>
            <person name="Hiraoka Y."/>
        </authorList>
    </citation>
    <scope>NUCLEOTIDE SEQUENCE [LARGE SCALE GENOMIC DNA] OF 140-321</scope>
    <scope>SUBCELLULAR LOCATION</scope>
    <source>
        <strain>ATCC 38364 / 968</strain>
    </source>
</reference>
<reference key="3">
    <citation type="journal article" date="2002" name="Mol. Cell. Biol.">
        <title>Proteomics analysis reveals stable multiprotein complexes in both fission and budding yeasts containing Myb-related Cdc5p/Cef1p, novel pre-mRNA splicing factors, and snRNAs.</title>
        <authorList>
            <person name="Ohi M.D."/>
            <person name="Link A.J."/>
            <person name="Ren L."/>
            <person name="Jennings J.L."/>
            <person name="McDonald W.H."/>
            <person name="Gould K.L."/>
        </authorList>
    </citation>
    <scope>IDENTIFICATION IN THE CWF COMPLEX</scope>
    <scope>IDENTIFICATION BY MASS SPECTROMETRY</scope>
</reference>
<reference key="4">
    <citation type="journal article" date="2006" name="Nat. Biotechnol.">
        <title>ORFeome cloning and global analysis of protein localization in the fission yeast Schizosaccharomyces pombe.</title>
        <authorList>
            <person name="Matsuyama A."/>
            <person name="Arai R."/>
            <person name="Yashiroda Y."/>
            <person name="Shirai A."/>
            <person name="Kamata A."/>
            <person name="Sekido S."/>
            <person name="Kobayashi Y."/>
            <person name="Hashimoto A."/>
            <person name="Hamamoto M."/>
            <person name="Hiraoka Y."/>
            <person name="Horinouchi S."/>
            <person name="Yoshida M."/>
        </authorList>
    </citation>
    <scope>SUBCELLULAR LOCATION [LARGE SCALE ANALYSIS]</scope>
</reference>
<reference key="5">
    <citation type="journal article" date="2008" name="J. Proteome Res.">
        <title>Phosphoproteome analysis of fission yeast.</title>
        <authorList>
            <person name="Wilson-Grady J.T."/>
            <person name="Villen J."/>
            <person name="Gygi S.P."/>
        </authorList>
    </citation>
    <scope>PHOSPHORYLATION [LARGE SCALE ANALYSIS] AT SER-11; SER-13; SER-275 AND SER-277</scope>
    <scope>IDENTIFICATION BY MASS SPECTROMETRY</scope>
</reference>
<organism>
    <name type="scientific">Schizosaccharomyces pombe (strain 972 / ATCC 24843)</name>
    <name type="common">Fission yeast</name>
    <dbReference type="NCBI Taxonomy" id="284812"/>
    <lineage>
        <taxon>Eukaryota</taxon>
        <taxon>Fungi</taxon>
        <taxon>Dikarya</taxon>
        <taxon>Ascomycota</taxon>
        <taxon>Taphrinomycotina</taxon>
        <taxon>Schizosaccharomycetes</taxon>
        <taxon>Schizosaccharomycetales</taxon>
        <taxon>Schizosaccharomycetaceae</taxon>
        <taxon>Schizosaccharomyces</taxon>
    </lineage>
</organism>
<keyword id="KW-0175">Coiled coil</keyword>
<keyword id="KW-0507">mRNA processing</keyword>
<keyword id="KW-0508">mRNA splicing</keyword>
<keyword id="KW-0539">Nucleus</keyword>
<keyword id="KW-0597">Phosphoprotein</keyword>
<keyword id="KW-1185">Reference proteome</keyword>
<keyword id="KW-0747">Spliceosome</keyword>
<proteinExistence type="evidence at protein level"/>
<sequence>MKRKAVLEAFSDSEDEDEKKLKGPQLITGFSAEEGVHYQNETIQRIHEKKRAPKIIHIASDENWMEKRKARFKKKETEVHEKPSQLPDSGLNYGLNIRVASSSAADNEIVDWKANNSNEKAQNKIATNKESTDILPEEVQLVLNDLNDDVKSANSANLQPITTNVVNEKDAYRKDIDELPEPSNMKDYSEIPVEEFGAAMLRGMGWNGQLSSKDAFDVNQRPTFLGMGAKPVDSELTELDIWKNPKKTMFLPVKPLESNSALNSQNEHTEVQKKSNSIDNLTPSSELFRKRSRDNNLSRESSVSSKHLDYNSRNYNKRDRDPDRTKYREYHSERRKQHRTDRYSDDYYQGRSYSYKKRSHRSDRYTERENPDRSYRSTRTL</sequence>
<name>SPP2_SCHPO</name>
<protein>
    <recommendedName>
        <fullName>Pre-mRNA-splicing factor cwf28</fullName>
    </recommendedName>
    <alternativeName>
        <fullName>Complexed with cdc5 protein 28</fullName>
    </alternativeName>
</protein>
<accession>O43031</accession>
<accession>Q9US93</accession>